<feature type="chain" id="PRO_1000123509" description="Small ribosomal subunit protein uS12">
    <location>
        <begin position="1"/>
        <end position="124"/>
    </location>
</feature>
<feature type="modified residue" description="3-methylthioaspartic acid" evidence="1">
    <location>
        <position position="89"/>
    </location>
</feature>
<name>RS12_SALA4</name>
<comment type="function">
    <text evidence="2">With S4 and S5 plays an important role in translational accuracy.</text>
</comment>
<comment type="function">
    <text evidence="2">Interacts with and stabilizes bases of the 16S rRNA that are involved in tRNA selection in the A site and with the mRNA backbone. Located at the interface of the 30S and 50S subunits, it traverses the body of the 30S subunit contacting proteins on the other side and probably holding the rRNA structure together. The combined cluster of proteins S8, S12 and S17 appears to hold together the shoulder and platform of the 30S subunit.</text>
</comment>
<comment type="subunit">
    <text evidence="2">Part of the 30S ribosomal subunit. Contacts proteins S8 and S17. May interact with IF1 in the 30S initiation complex.</text>
</comment>
<comment type="similarity">
    <text evidence="2">Belongs to the universal ribosomal protein uS12 family.</text>
</comment>
<proteinExistence type="inferred from homology"/>
<dbReference type="EMBL" id="CP001138">
    <property type="protein sequence ID" value="ACH49922.1"/>
    <property type="molecule type" value="Genomic_DNA"/>
</dbReference>
<dbReference type="RefSeq" id="WP_000246815.1">
    <property type="nucleotide sequence ID" value="NC_011149.1"/>
</dbReference>
<dbReference type="SMR" id="B5F8G0"/>
<dbReference type="GeneID" id="98390450"/>
<dbReference type="KEGG" id="sea:SeAg_B3645"/>
<dbReference type="HOGENOM" id="CLU_104295_1_2_6"/>
<dbReference type="Proteomes" id="UP000008819">
    <property type="component" value="Chromosome"/>
</dbReference>
<dbReference type="GO" id="GO:0015935">
    <property type="term" value="C:small ribosomal subunit"/>
    <property type="evidence" value="ECO:0007669"/>
    <property type="project" value="InterPro"/>
</dbReference>
<dbReference type="GO" id="GO:0019843">
    <property type="term" value="F:rRNA binding"/>
    <property type="evidence" value="ECO:0007669"/>
    <property type="project" value="UniProtKB-UniRule"/>
</dbReference>
<dbReference type="GO" id="GO:0003735">
    <property type="term" value="F:structural constituent of ribosome"/>
    <property type="evidence" value="ECO:0007669"/>
    <property type="project" value="InterPro"/>
</dbReference>
<dbReference type="GO" id="GO:0000049">
    <property type="term" value="F:tRNA binding"/>
    <property type="evidence" value="ECO:0007669"/>
    <property type="project" value="UniProtKB-UniRule"/>
</dbReference>
<dbReference type="GO" id="GO:0006412">
    <property type="term" value="P:translation"/>
    <property type="evidence" value="ECO:0007669"/>
    <property type="project" value="UniProtKB-UniRule"/>
</dbReference>
<dbReference type="CDD" id="cd03368">
    <property type="entry name" value="Ribosomal_S12"/>
    <property type="match status" value="1"/>
</dbReference>
<dbReference type="FunFam" id="2.40.50.140:FF:000001">
    <property type="entry name" value="30S ribosomal protein S12"/>
    <property type="match status" value="1"/>
</dbReference>
<dbReference type="Gene3D" id="2.40.50.140">
    <property type="entry name" value="Nucleic acid-binding proteins"/>
    <property type="match status" value="1"/>
</dbReference>
<dbReference type="HAMAP" id="MF_00403_B">
    <property type="entry name" value="Ribosomal_uS12_B"/>
    <property type="match status" value="1"/>
</dbReference>
<dbReference type="InterPro" id="IPR012340">
    <property type="entry name" value="NA-bd_OB-fold"/>
</dbReference>
<dbReference type="InterPro" id="IPR006032">
    <property type="entry name" value="Ribosomal_uS12"/>
</dbReference>
<dbReference type="InterPro" id="IPR005679">
    <property type="entry name" value="Ribosomal_uS12_bac"/>
</dbReference>
<dbReference type="NCBIfam" id="TIGR00981">
    <property type="entry name" value="rpsL_bact"/>
    <property type="match status" value="1"/>
</dbReference>
<dbReference type="PANTHER" id="PTHR11652">
    <property type="entry name" value="30S RIBOSOMAL PROTEIN S12 FAMILY MEMBER"/>
    <property type="match status" value="1"/>
</dbReference>
<dbReference type="Pfam" id="PF00164">
    <property type="entry name" value="Ribosom_S12_S23"/>
    <property type="match status" value="1"/>
</dbReference>
<dbReference type="PIRSF" id="PIRSF002133">
    <property type="entry name" value="Ribosomal_S12/S23"/>
    <property type="match status" value="1"/>
</dbReference>
<dbReference type="PRINTS" id="PR01034">
    <property type="entry name" value="RIBOSOMALS12"/>
</dbReference>
<dbReference type="SUPFAM" id="SSF50249">
    <property type="entry name" value="Nucleic acid-binding proteins"/>
    <property type="match status" value="1"/>
</dbReference>
<dbReference type="PROSITE" id="PS00055">
    <property type="entry name" value="RIBOSOMAL_S12"/>
    <property type="match status" value="1"/>
</dbReference>
<keyword id="KW-0488">Methylation</keyword>
<keyword id="KW-0687">Ribonucleoprotein</keyword>
<keyword id="KW-0689">Ribosomal protein</keyword>
<keyword id="KW-0694">RNA-binding</keyword>
<keyword id="KW-0699">rRNA-binding</keyword>
<keyword id="KW-0820">tRNA-binding</keyword>
<evidence type="ECO:0000250" key="1"/>
<evidence type="ECO:0000255" key="2">
    <source>
        <dbReference type="HAMAP-Rule" id="MF_00403"/>
    </source>
</evidence>
<evidence type="ECO:0000305" key="3"/>
<gene>
    <name evidence="2" type="primary">rpsL</name>
    <name type="ordered locus">SeAg_B3645</name>
</gene>
<accession>B5F8G0</accession>
<sequence>MATVNQLVRKPRARKVAKSNVPALEACPQKRGVCTRVYTTTPKKPNSALRKVCRVRLTNGFEVTSYIGGEGHNLQEHSVILIRGGRVKDLPGVRYHTVRGALDCSGVKDRKQARSKYGVKRPKA</sequence>
<organism>
    <name type="scientific">Salmonella agona (strain SL483)</name>
    <dbReference type="NCBI Taxonomy" id="454166"/>
    <lineage>
        <taxon>Bacteria</taxon>
        <taxon>Pseudomonadati</taxon>
        <taxon>Pseudomonadota</taxon>
        <taxon>Gammaproteobacteria</taxon>
        <taxon>Enterobacterales</taxon>
        <taxon>Enterobacteriaceae</taxon>
        <taxon>Salmonella</taxon>
    </lineage>
</organism>
<reference key="1">
    <citation type="journal article" date="2011" name="J. Bacteriol.">
        <title>Comparative genomics of 28 Salmonella enterica isolates: evidence for CRISPR-mediated adaptive sublineage evolution.</title>
        <authorList>
            <person name="Fricke W.F."/>
            <person name="Mammel M.K."/>
            <person name="McDermott P.F."/>
            <person name="Tartera C."/>
            <person name="White D.G."/>
            <person name="Leclerc J.E."/>
            <person name="Ravel J."/>
            <person name="Cebula T.A."/>
        </authorList>
    </citation>
    <scope>NUCLEOTIDE SEQUENCE [LARGE SCALE GENOMIC DNA]</scope>
    <source>
        <strain>SL483</strain>
    </source>
</reference>
<protein>
    <recommendedName>
        <fullName evidence="2">Small ribosomal subunit protein uS12</fullName>
    </recommendedName>
    <alternativeName>
        <fullName evidence="3">30S ribosomal protein S12</fullName>
    </alternativeName>
</protein>